<sequence>MIGNERHGLVGVIGADLIRNAKIPLILLVAVLISAVLVVTTAHRTRLLTAEREQLVLERDALDIEWRNLILEENALGDHSRVESIAIEKLKMQHVDPSQENIVIK</sequence>
<keyword id="KW-0131">Cell cycle</keyword>
<keyword id="KW-0132">Cell division</keyword>
<keyword id="KW-0997">Cell inner membrane</keyword>
<keyword id="KW-1003">Cell membrane</keyword>
<keyword id="KW-0472">Membrane</keyword>
<keyword id="KW-1185">Reference proteome</keyword>
<keyword id="KW-0812">Transmembrane</keyword>
<keyword id="KW-1133">Transmembrane helix</keyword>
<dbReference type="EMBL" id="AE009952">
    <property type="protein sequence ID" value="AAM87181.1"/>
    <property type="molecule type" value="Genomic_DNA"/>
</dbReference>
<dbReference type="EMBL" id="AE017042">
    <property type="protein sequence ID" value="AAS63784.1"/>
    <property type="molecule type" value="Genomic_DNA"/>
</dbReference>
<dbReference type="EMBL" id="AL590842">
    <property type="protein sequence ID" value="CAL19227.1"/>
    <property type="molecule type" value="Genomic_DNA"/>
</dbReference>
<dbReference type="PIR" id="AI0067">
    <property type="entry name" value="AI0067"/>
</dbReference>
<dbReference type="RefSeq" id="WP_002210441.1">
    <property type="nucleotide sequence ID" value="NZ_WUCM01000081.1"/>
</dbReference>
<dbReference type="RefSeq" id="YP_002345619.1">
    <property type="nucleotide sequence ID" value="NC_003143.1"/>
</dbReference>
<dbReference type="SMR" id="Q7CGA7"/>
<dbReference type="STRING" id="214092.YPO0548"/>
<dbReference type="PaxDb" id="214092-YPO0548"/>
<dbReference type="DNASU" id="1148580"/>
<dbReference type="EnsemblBacteria" id="AAS63784">
    <property type="protein sequence ID" value="AAS63784"/>
    <property type="gene ID" value="YP_3636"/>
</dbReference>
<dbReference type="GeneID" id="57974067"/>
<dbReference type="KEGG" id="ype:YPO0548"/>
<dbReference type="KEGG" id="ypk:y3633"/>
<dbReference type="KEGG" id="ypm:YP_3636"/>
<dbReference type="PATRIC" id="fig|214092.21.peg.801"/>
<dbReference type="eggNOG" id="COG3116">
    <property type="taxonomic scope" value="Bacteria"/>
</dbReference>
<dbReference type="HOGENOM" id="CLU_156524_2_0_6"/>
<dbReference type="OMA" id="DLWHHKW"/>
<dbReference type="OrthoDB" id="6196803at2"/>
<dbReference type="Proteomes" id="UP000000815">
    <property type="component" value="Chromosome"/>
</dbReference>
<dbReference type="Proteomes" id="UP000001019">
    <property type="component" value="Chromosome"/>
</dbReference>
<dbReference type="Proteomes" id="UP000002490">
    <property type="component" value="Chromosome"/>
</dbReference>
<dbReference type="GO" id="GO:0032153">
    <property type="term" value="C:cell division site"/>
    <property type="evidence" value="ECO:0000318"/>
    <property type="project" value="GO_Central"/>
</dbReference>
<dbReference type="GO" id="GO:0005886">
    <property type="term" value="C:plasma membrane"/>
    <property type="evidence" value="ECO:0000318"/>
    <property type="project" value="GO_Central"/>
</dbReference>
<dbReference type="GO" id="GO:0043093">
    <property type="term" value="P:FtsZ-dependent cytokinesis"/>
    <property type="evidence" value="ECO:0000318"/>
    <property type="project" value="GO_Central"/>
</dbReference>
<dbReference type="HAMAP" id="MF_00910">
    <property type="entry name" value="FtsL"/>
    <property type="match status" value="1"/>
</dbReference>
<dbReference type="InterPro" id="IPR011922">
    <property type="entry name" value="Cell_div_FtsL"/>
</dbReference>
<dbReference type="NCBIfam" id="TIGR02209">
    <property type="entry name" value="ftsL_broad"/>
    <property type="match status" value="1"/>
</dbReference>
<dbReference type="NCBIfam" id="NF008040">
    <property type="entry name" value="PRK10772.1"/>
    <property type="match status" value="1"/>
</dbReference>
<dbReference type="PANTHER" id="PTHR37479">
    <property type="entry name" value="CELL DIVISION PROTEIN FTSL"/>
    <property type="match status" value="1"/>
</dbReference>
<dbReference type="PANTHER" id="PTHR37479:SF1">
    <property type="entry name" value="CELL DIVISION PROTEIN FTSL"/>
    <property type="match status" value="1"/>
</dbReference>
<dbReference type="Pfam" id="PF04999">
    <property type="entry name" value="FtsL"/>
    <property type="match status" value="1"/>
</dbReference>
<reference key="1">
    <citation type="journal article" date="2004" name="DNA Res.">
        <title>Complete genome sequence of Yersinia pestis strain 91001, an isolate avirulent to humans.</title>
        <authorList>
            <person name="Song Y."/>
            <person name="Tong Z."/>
            <person name="Wang J."/>
            <person name="Wang L."/>
            <person name="Guo Z."/>
            <person name="Han Y."/>
            <person name="Zhang J."/>
            <person name="Pei D."/>
            <person name="Zhou D."/>
            <person name="Qin H."/>
            <person name="Pang X."/>
            <person name="Han Y."/>
            <person name="Zhai J."/>
            <person name="Li M."/>
            <person name="Cui B."/>
            <person name="Qi Z."/>
            <person name="Jin L."/>
            <person name="Dai R."/>
            <person name="Chen F."/>
            <person name="Li S."/>
            <person name="Ye C."/>
            <person name="Du Z."/>
            <person name="Lin W."/>
            <person name="Wang J."/>
            <person name="Yu J."/>
            <person name="Yang H."/>
            <person name="Wang J."/>
            <person name="Huang P."/>
            <person name="Yang R."/>
        </authorList>
    </citation>
    <scope>NUCLEOTIDE SEQUENCE [LARGE SCALE GENOMIC DNA]</scope>
    <source>
        <strain>91001 / Biovar Mediaevalis</strain>
    </source>
</reference>
<reference key="2">
    <citation type="journal article" date="2002" name="J. Bacteriol.">
        <title>Genome sequence of Yersinia pestis KIM.</title>
        <authorList>
            <person name="Deng W."/>
            <person name="Burland V."/>
            <person name="Plunkett G. III"/>
            <person name="Boutin A."/>
            <person name="Mayhew G.F."/>
            <person name="Liss P."/>
            <person name="Perna N.T."/>
            <person name="Rose D.J."/>
            <person name="Mau B."/>
            <person name="Zhou S."/>
            <person name="Schwartz D.C."/>
            <person name="Fetherston J.D."/>
            <person name="Lindler L.E."/>
            <person name="Brubaker R.R."/>
            <person name="Plano G.V."/>
            <person name="Straley S.C."/>
            <person name="McDonough K.A."/>
            <person name="Nilles M.L."/>
            <person name="Matson J.S."/>
            <person name="Blattner F.R."/>
            <person name="Perry R.D."/>
        </authorList>
    </citation>
    <scope>NUCLEOTIDE SEQUENCE [LARGE SCALE GENOMIC DNA]</scope>
    <source>
        <strain>KIM10+ / Biovar Mediaevalis</strain>
    </source>
</reference>
<reference key="3">
    <citation type="journal article" date="2001" name="Nature">
        <title>Genome sequence of Yersinia pestis, the causative agent of plague.</title>
        <authorList>
            <person name="Parkhill J."/>
            <person name="Wren B.W."/>
            <person name="Thomson N.R."/>
            <person name="Titball R.W."/>
            <person name="Holden M.T.G."/>
            <person name="Prentice M.B."/>
            <person name="Sebaihia M."/>
            <person name="James K.D."/>
            <person name="Churcher C.M."/>
            <person name="Mungall K.L."/>
            <person name="Baker S."/>
            <person name="Basham D."/>
            <person name="Bentley S.D."/>
            <person name="Brooks K."/>
            <person name="Cerdeno-Tarraga A.-M."/>
            <person name="Chillingworth T."/>
            <person name="Cronin A."/>
            <person name="Davies R.M."/>
            <person name="Davis P."/>
            <person name="Dougan G."/>
            <person name="Feltwell T."/>
            <person name="Hamlin N."/>
            <person name="Holroyd S."/>
            <person name="Jagels K."/>
            <person name="Karlyshev A.V."/>
            <person name="Leather S."/>
            <person name="Moule S."/>
            <person name="Oyston P.C.F."/>
            <person name="Quail M.A."/>
            <person name="Rutherford K.M."/>
            <person name="Simmonds M."/>
            <person name="Skelton J."/>
            <person name="Stevens K."/>
            <person name="Whitehead S."/>
            <person name="Barrell B.G."/>
        </authorList>
    </citation>
    <scope>NUCLEOTIDE SEQUENCE [LARGE SCALE GENOMIC DNA]</scope>
    <source>
        <strain>CO-92 / Biovar Orientalis</strain>
    </source>
</reference>
<feature type="chain" id="PRO_0000414575" description="Cell division protein FtsL">
    <location>
        <begin position="1"/>
        <end position="105"/>
    </location>
</feature>
<feature type="topological domain" description="Cytoplasmic" evidence="1">
    <location>
        <begin position="1"/>
        <end position="22"/>
    </location>
</feature>
<feature type="transmembrane region" description="Helical" evidence="1">
    <location>
        <begin position="23"/>
        <end position="43"/>
    </location>
</feature>
<feature type="topological domain" description="Periplasmic" evidence="1">
    <location>
        <begin position="44"/>
        <end position="105"/>
    </location>
</feature>
<accession>Q7CGA7</accession>
<accession>Q74Q69</accession>
<proteinExistence type="inferred from homology"/>
<evidence type="ECO:0000255" key="1">
    <source>
        <dbReference type="HAMAP-Rule" id="MF_00910"/>
    </source>
</evidence>
<comment type="function">
    <text evidence="1">Essential cell division protein. May link together the upstream cell division proteins, which are predominantly cytoplasmic, with the downstream cell division proteins, which are predominantly periplasmic.</text>
</comment>
<comment type="subunit">
    <text evidence="1">Part of a complex composed of FtsB, FtsL and FtsQ.</text>
</comment>
<comment type="subcellular location">
    <subcellularLocation>
        <location evidence="1">Cell inner membrane</location>
        <topology evidence="1">Single-pass type II membrane protein</topology>
    </subcellularLocation>
    <text evidence="1">Localizes to the division septum where it forms a ring structure.</text>
</comment>
<comment type="similarity">
    <text evidence="1">Belongs to the FtsL family.</text>
</comment>
<protein>
    <recommendedName>
        <fullName evidence="1">Cell division protein FtsL</fullName>
    </recommendedName>
</protein>
<organism>
    <name type="scientific">Yersinia pestis</name>
    <dbReference type="NCBI Taxonomy" id="632"/>
    <lineage>
        <taxon>Bacteria</taxon>
        <taxon>Pseudomonadati</taxon>
        <taxon>Pseudomonadota</taxon>
        <taxon>Gammaproteobacteria</taxon>
        <taxon>Enterobacterales</taxon>
        <taxon>Yersiniaceae</taxon>
        <taxon>Yersinia</taxon>
    </lineage>
</organism>
<name>FTSL_YERPE</name>
<gene>
    <name evidence="1" type="primary">ftsL</name>
    <name type="ordered locus">YPO0548</name>
    <name type="ordered locus">y3633</name>
    <name type="ordered locus">YP_3636</name>
</gene>